<gene>
    <name evidence="1" type="primary">leuS</name>
    <name type="ordered locus">AZOSEA24870</name>
    <name type="ORF">ebA4386</name>
</gene>
<protein>
    <recommendedName>
        <fullName evidence="1">Leucine--tRNA ligase</fullName>
        <ecNumber evidence="1">6.1.1.4</ecNumber>
    </recommendedName>
    <alternativeName>
        <fullName evidence="1">Leucyl-tRNA synthetase</fullName>
        <shortName evidence="1">LeuRS</shortName>
    </alternativeName>
</protein>
<reference key="1">
    <citation type="journal article" date="2005" name="Arch. Microbiol.">
        <title>The genome sequence of an anaerobic aromatic-degrading denitrifying bacterium, strain EbN1.</title>
        <authorList>
            <person name="Rabus R."/>
            <person name="Kube M."/>
            <person name="Heider J."/>
            <person name="Beck A."/>
            <person name="Heitmann K."/>
            <person name="Widdel F."/>
            <person name="Reinhardt R."/>
        </authorList>
    </citation>
    <scope>NUCLEOTIDE SEQUENCE [LARGE SCALE GENOMIC DNA]</scope>
    <source>
        <strain>DSM 19018 / LMG 30748 / EbN1</strain>
    </source>
</reference>
<name>SYL_AROAE</name>
<accession>Q5P252</accession>
<dbReference type="EC" id="6.1.1.4" evidence="1"/>
<dbReference type="EMBL" id="CR555306">
    <property type="protein sequence ID" value="CAI08612.1"/>
    <property type="molecule type" value="Genomic_DNA"/>
</dbReference>
<dbReference type="RefSeq" id="WP_011238298.1">
    <property type="nucleotide sequence ID" value="NC_006513.1"/>
</dbReference>
<dbReference type="SMR" id="Q5P252"/>
<dbReference type="STRING" id="76114.ebA4386"/>
<dbReference type="KEGG" id="eba:ebA4386"/>
<dbReference type="eggNOG" id="COG0495">
    <property type="taxonomic scope" value="Bacteria"/>
</dbReference>
<dbReference type="HOGENOM" id="CLU_004427_0_0_4"/>
<dbReference type="OrthoDB" id="9810365at2"/>
<dbReference type="Proteomes" id="UP000006552">
    <property type="component" value="Chromosome"/>
</dbReference>
<dbReference type="GO" id="GO:0005829">
    <property type="term" value="C:cytosol"/>
    <property type="evidence" value="ECO:0007669"/>
    <property type="project" value="TreeGrafter"/>
</dbReference>
<dbReference type="GO" id="GO:0002161">
    <property type="term" value="F:aminoacyl-tRNA deacylase activity"/>
    <property type="evidence" value="ECO:0007669"/>
    <property type="project" value="InterPro"/>
</dbReference>
<dbReference type="GO" id="GO:0005524">
    <property type="term" value="F:ATP binding"/>
    <property type="evidence" value="ECO:0007669"/>
    <property type="project" value="UniProtKB-UniRule"/>
</dbReference>
<dbReference type="GO" id="GO:0004823">
    <property type="term" value="F:leucine-tRNA ligase activity"/>
    <property type="evidence" value="ECO:0007669"/>
    <property type="project" value="UniProtKB-UniRule"/>
</dbReference>
<dbReference type="GO" id="GO:0006429">
    <property type="term" value="P:leucyl-tRNA aminoacylation"/>
    <property type="evidence" value="ECO:0007669"/>
    <property type="project" value="UniProtKB-UniRule"/>
</dbReference>
<dbReference type="CDD" id="cd07958">
    <property type="entry name" value="Anticodon_Ia_Leu_BEm"/>
    <property type="match status" value="1"/>
</dbReference>
<dbReference type="CDD" id="cd00812">
    <property type="entry name" value="LeuRS_core"/>
    <property type="match status" value="1"/>
</dbReference>
<dbReference type="FunFam" id="1.10.730.10:FF:000003">
    <property type="entry name" value="Leucine--tRNA ligase"/>
    <property type="match status" value="1"/>
</dbReference>
<dbReference type="FunFam" id="2.20.28.290:FF:000001">
    <property type="entry name" value="Leucine--tRNA ligase"/>
    <property type="match status" value="1"/>
</dbReference>
<dbReference type="FunFam" id="3.10.20.590:FF:000001">
    <property type="entry name" value="Leucine--tRNA ligase"/>
    <property type="match status" value="1"/>
</dbReference>
<dbReference type="FunFam" id="3.40.50.620:FF:000003">
    <property type="entry name" value="Leucine--tRNA ligase"/>
    <property type="match status" value="1"/>
</dbReference>
<dbReference type="FunFam" id="3.40.50.620:FF:000124">
    <property type="entry name" value="Leucine--tRNA ligase"/>
    <property type="match status" value="1"/>
</dbReference>
<dbReference type="FunFam" id="3.90.740.10:FF:000012">
    <property type="entry name" value="Leucine--tRNA ligase"/>
    <property type="match status" value="1"/>
</dbReference>
<dbReference type="Gene3D" id="2.20.28.290">
    <property type="match status" value="1"/>
</dbReference>
<dbReference type="Gene3D" id="3.10.20.590">
    <property type="match status" value="1"/>
</dbReference>
<dbReference type="Gene3D" id="3.40.50.620">
    <property type="entry name" value="HUPs"/>
    <property type="match status" value="2"/>
</dbReference>
<dbReference type="Gene3D" id="1.10.730.10">
    <property type="entry name" value="Isoleucyl-tRNA Synthetase, Domain 1"/>
    <property type="match status" value="1"/>
</dbReference>
<dbReference type="HAMAP" id="MF_00049_B">
    <property type="entry name" value="Leu_tRNA_synth_B"/>
    <property type="match status" value="1"/>
</dbReference>
<dbReference type="InterPro" id="IPR001412">
    <property type="entry name" value="aa-tRNA-synth_I_CS"/>
</dbReference>
<dbReference type="InterPro" id="IPR002300">
    <property type="entry name" value="aa-tRNA-synth_Ia"/>
</dbReference>
<dbReference type="InterPro" id="IPR002302">
    <property type="entry name" value="Leu-tRNA-ligase"/>
</dbReference>
<dbReference type="InterPro" id="IPR025709">
    <property type="entry name" value="Leu_tRNA-synth_edit"/>
</dbReference>
<dbReference type="InterPro" id="IPR013155">
    <property type="entry name" value="M/V/L/I-tRNA-synth_anticd-bd"/>
</dbReference>
<dbReference type="InterPro" id="IPR015413">
    <property type="entry name" value="Methionyl/Leucyl_tRNA_Synth"/>
</dbReference>
<dbReference type="InterPro" id="IPR014729">
    <property type="entry name" value="Rossmann-like_a/b/a_fold"/>
</dbReference>
<dbReference type="InterPro" id="IPR009080">
    <property type="entry name" value="tRNAsynth_Ia_anticodon-bd"/>
</dbReference>
<dbReference type="InterPro" id="IPR009008">
    <property type="entry name" value="Val/Leu/Ile-tRNA-synth_edit"/>
</dbReference>
<dbReference type="NCBIfam" id="TIGR00396">
    <property type="entry name" value="leuS_bact"/>
    <property type="match status" value="1"/>
</dbReference>
<dbReference type="PANTHER" id="PTHR43740:SF2">
    <property type="entry name" value="LEUCINE--TRNA LIGASE, MITOCHONDRIAL"/>
    <property type="match status" value="1"/>
</dbReference>
<dbReference type="PANTHER" id="PTHR43740">
    <property type="entry name" value="LEUCYL-TRNA SYNTHETASE"/>
    <property type="match status" value="1"/>
</dbReference>
<dbReference type="Pfam" id="PF08264">
    <property type="entry name" value="Anticodon_1"/>
    <property type="match status" value="1"/>
</dbReference>
<dbReference type="Pfam" id="PF00133">
    <property type="entry name" value="tRNA-synt_1"/>
    <property type="match status" value="2"/>
</dbReference>
<dbReference type="Pfam" id="PF13603">
    <property type="entry name" value="tRNA-synt_1_2"/>
    <property type="match status" value="1"/>
</dbReference>
<dbReference type="Pfam" id="PF09334">
    <property type="entry name" value="tRNA-synt_1g"/>
    <property type="match status" value="1"/>
</dbReference>
<dbReference type="PRINTS" id="PR00985">
    <property type="entry name" value="TRNASYNTHLEU"/>
</dbReference>
<dbReference type="SUPFAM" id="SSF47323">
    <property type="entry name" value="Anticodon-binding domain of a subclass of class I aminoacyl-tRNA synthetases"/>
    <property type="match status" value="1"/>
</dbReference>
<dbReference type="SUPFAM" id="SSF52374">
    <property type="entry name" value="Nucleotidylyl transferase"/>
    <property type="match status" value="1"/>
</dbReference>
<dbReference type="SUPFAM" id="SSF50677">
    <property type="entry name" value="ValRS/IleRS/LeuRS editing domain"/>
    <property type="match status" value="1"/>
</dbReference>
<dbReference type="PROSITE" id="PS00178">
    <property type="entry name" value="AA_TRNA_LIGASE_I"/>
    <property type="match status" value="1"/>
</dbReference>
<comment type="catalytic activity">
    <reaction evidence="1">
        <text>tRNA(Leu) + L-leucine + ATP = L-leucyl-tRNA(Leu) + AMP + diphosphate</text>
        <dbReference type="Rhea" id="RHEA:11688"/>
        <dbReference type="Rhea" id="RHEA-COMP:9613"/>
        <dbReference type="Rhea" id="RHEA-COMP:9622"/>
        <dbReference type="ChEBI" id="CHEBI:30616"/>
        <dbReference type="ChEBI" id="CHEBI:33019"/>
        <dbReference type="ChEBI" id="CHEBI:57427"/>
        <dbReference type="ChEBI" id="CHEBI:78442"/>
        <dbReference type="ChEBI" id="CHEBI:78494"/>
        <dbReference type="ChEBI" id="CHEBI:456215"/>
        <dbReference type="EC" id="6.1.1.4"/>
    </reaction>
</comment>
<comment type="subcellular location">
    <subcellularLocation>
        <location evidence="1">Cytoplasm</location>
    </subcellularLocation>
</comment>
<comment type="similarity">
    <text evidence="1">Belongs to the class-I aminoacyl-tRNA synthetase family.</text>
</comment>
<organism>
    <name type="scientific">Aromatoleum aromaticum (strain DSM 19018 / LMG 30748 / EbN1)</name>
    <name type="common">Azoarcus sp. (strain EbN1)</name>
    <dbReference type="NCBI Taxonomy" id="76114"/>
    <lineage>
        <taxon>Bacteria</taxon>
        <taxon>Pseudomonadati</taxon>
        <taxon>Pseudomonadota</taxon>
        <taxon>Betaproteobacteria</taxon>
        <taxon>Rhodocyclales</taxon>
        <taxon>Rhodocyclaceae</taxon>
        <taxon>Aromatoleum</taxon>
    </lineage>
</organism>
<evidence type="ECO:0000255" key="1">
    <source>
        <dbReference type="HAMAP-Rule" id="MF_00049"/>
    </source>
</evidence>
<keyword id="KW-0030">Aminoacyl-tRNA synthetase</keyword>
<keyword id="KW-0067">ATP-binding</keyword>
<keyword id="KW-0963">Cytoplasm</keyword>
<keyword id="KW-0436">Ligase</keyword>
<keyword id="KW-0547">Nucleotide-binding</keyword>
<keyword id="KW-0648">Protein biosynthesis</keyword>
<keyword id="KW-1185">Reference proteome</keyword>
<feature type="chain" id="PRO_1000091289" description="Leucine--tRNA ligase">
    <location>
        <begin position="1"/>
        <end position="873"/>
    </location>
</feature>
<feature type="short sequence motif" description="'HIGH' region">
    <location>
        <begin position="42"/>
        <end position="52"/>
    </location>
</feature>
<feature type="short sequence motif" description="'KMSKS' region">
    <location>
        <begin position="628"/>
        <end position="632"/>
    </location>
</feature>
<feature type="binding site" evidence="1">
    <location>
        <position position="631"/>
    </location>
    <ligand>
        <name>ATP</name>
        <dbReference type="ChEBI" id="CHEBI:30616"/>
    </ligand>
</feature>
<proteinExistence type="inferred from homology"/>
<sequence>MQDKYTPAAVEATAQQHWESTQAFKVAEDAGKPKYYCLSMFPYPSGKLHMGHVRNYTIGDVLARYHRMRGFNVLQPMGWDAFGMPAENAAIQNNVPPAKWTYANIDYMKTQLKRLGFALDWSRELATCKPDYYRWEQWLFTRLYQKGLIYKKLGTVNWDPVDETVLANEQVIDGRGWRSGALIEKREIPMYYMKITAYADELLEALDTLTGWPEQVKLMQKNWIGRSEGVEVHFPYEVSTIGASGVLKVFTTRADTLMGATYVAVAAEHPLALQAAVNDPELAAFIEECRHGGVAEADLATMEKKGMPTGLRVVHPLTGEHLPVWIANYVLMGYGEGAVMAVPAHDERDFAFATKYRLPIRMVVRSTRDAYTDTVAPWQDAYAEQGRLVNSGKYDGLHFHDAIEAIAAELTAKGLGAKRTQYRLRDWGISRQRYWGCPIPMIHCADCGDVPVPDEQLPVVLPEDVAVTGRGSPLAKMPRFYECDCPKCGKPAKRETDTMDTFVESSWYFLRYASADNGQAMVDERVNYWAPVDQYIGGIEHAILHLLYSRFFTRAMRDEGLVNVSEPFTNLLTQGMVVAETYYRDADGGKKQWINPADVEVERDEKGRIVAAKLTADGAPVVIGGIEKMAKSKNNGVDPQALVDQYGADTARLFIIFAAPPDQQLEWSDSGVEGAYRFLRRVWSFGHAFVSEFRPQLPADRQLDAVQLPEALAAVRREIHVCLRQANYDFGKHQFNTVVSAAMKILNALEKAPRDVAAAHAQVAEEGLDILLRLLAPITPHVAHALWQDCGFTGDVLHASWPEPSEDALRQDEIDLVLQVNGKLRGSLRVAAGASNSAIEALALGSETAQKFMEGKPPRKVVVVPGRLVNIVV</sequence>